<sequence>MKILLILACAIACTCGERYCAMKDDTGLSCRNGTASDCESCFNRGDLIWHLANWNFSWSIILIIFITVLQYGRPQFSWFVYGIKMLIMWLLWPIVLALTIFNAYSEYQVSRYVMFGFSIAGAIVTFVLWIMYFVRSIQLYRRTKSWWSFNPETNAILCVSALGRSYVLPLEGVPTGVTLTLLSGNLYAEGFKIAGGMTIDNLPKYVMVALPSRTIVYTLVGKKLKASSATGWAYYVKSKAGDYSTEARTDNLSEQEKLLHMV</sequence>
<proteinExistence type="inferred from homology"/>
<dbReference type="EMBL" id="X55980">
    <property type="protein sequence ID" value="CAA39452.1"/>
    <property type="molecule type" value="Genomic_RNA"/>
</dbReference>
<dbReference type="EMBL" id="X60056">
    <property type="protein sequence ID" value="CAA42656.1"/>
    <property type="molecule type" value="Genomic_RNA"/>
</dbReference>
<dbReference type="PIR" id="S24281">
    <property type="entry name" value="S24281"/>
</dbReference>
<dbReference type="SMR" id="P33464"/>
<dbReference type="GO" id="GO:0044178">
    <property type="term" value="C:host cell Golgi membrane"/>
    <property type="evidence" value="ECO:0007669"/>
    <property type="project" value="UniProtKB-SubCell"/>
</dbReference>
<dbReference type="GO" id="GO:0016020">
    <property type="term" value="C:membrane"/>
    <property type="evidence" value="ECO:0007669"/>
    <property type="project" value="UniProtKB-UniRule"/>
</dbReference>
<dbReference type="GO" id="GO:0019031">
    <property type="term" value="C:viral envelope"/>
    <property type="evidence" value="ECO:0007669"/>
    <property type="project" value="UniProtKB-UniRule"/>
</dbReference>
<dbReference type="GO" id="GO:0055036">
    <property type="term" value="C:virion membrane"/>
    <property type="evidence" value="ECO:0007669"/>
    <property type="project" value="UniProtKB-SubCell"/>
</dbReference>
<dbReference type="GO" id="GO:0039660">
    <property type="term" value="F:structural constituent of virion"/>
    <property type="evidence" value="ECO:0007669"/>
    <property type="project" value="UniProtKB-UniRule"/>
</dbReference>
<dbReference type="CDD" id="cd21564">
    <property type="entry name" value="alphaCoV_M"/>
    <property type="match status" value="1"/>
</dbReference>
<dbReference type="HAMAP" id="MF_04201">
    <property type="entry name" value="ALPHA_CORONA_M"/>
    <property type="match status" value="1"/>
</dbReference>
<dbReference type="InterPro" id="IPR042551">
    <property type="entry name" value="ALPHA_CORONA_M"/>
</dbReference>
<dbReference type="InterPro" id="IPR002574">
    <property type="entry name" value="M_CoV"/>
</dbReference>
<dbReference type="Pfam" id="PF01635">
    <property type="entry name" value="CoV_M"/>
    <property type="match status" value="1"/>
</dbReference>
<dbReference type="PROSITE" id="PS51927">
    <property type="entry name" value="COV_M"/>
    <property type="match status" value="1"/>
</dbReference>
<comment type="function">
    <text evidence="1 2">Component of the viral envelope that plays a central role in virus morphogenesis and assembly via its interactions with other viral proteins.</text>
</comment>
<comment type="subunit">
    <text evidence="1 2">Homomultimer. Interacts with envelope E protein in the budding compartment of the host cell, which is located between endoplasmic reticulum and the Golgi complex. Forms a complex with HE and S proteins. Interacts with nucleocapsid N protein. This interaction probably participates in RNA packaging into the virus.</text>
</comment>
<comment type="subcellular location">
    <subcellularLocation>
        <location evidence="1">Virion membrane</location>
        <topology evidence="1">Multi-pass membrane protein</topology>
    </subcellularLocation>
    <subcellularLocation>
        <location evidence="1">Host Golgi apparatus membrane</location>
        <topology evidence="1">Multi-pass membrane protein</topology>
    </subcellularLocation>
    <text evidence="1">Largely embedded in the lipid bilayer.</text>
</comment>
<comment type="similarity">
    <text evidence="1">Belongs to the alphacoronaviruses M protein family.</text>
</comment>
<organism>
    <name type="scientific">Porcine respiratory coronavirus (strain 86/137004 / isolate British)</name>
    <name type="common">PRCoV</name>
    <name type="synonym">PRCV</name>
    <dbReference type="NCBI Taxonomy" id="33736"/>
    <lineage>
        <taxon>Viruses</taxon>
        <taxon>Riboviria</taxon>
        <taxon>Orthornavirae</taxon>
        <taxon>Pisuviricota</taxon>
        <taxon>Pisoniviricetes</taxon>
        <taxon>Nidovirales</taxon>
        <taxon>Cornidovirineae</taxon>
        <taxon>Coronaviridae</taxon>
        <taxon>Orthocoronavirinae</taxon>
        <taxon>Alphacoronavirus</taxon>
        <taxon>Tegacovirus</taxon>
        <taxon>Alphacoronavirus 1</taxon>
    </lineage>
</organism>
<accession>P33464</accession>
<gene>
    <name evidence="1" type="primary">M</name>
</gene>
<evidence type="ECO:0000255" key="1">
    <source>
        <dbReference type="HAMAP-Rule" id="MF_04201"/>
    </source>
</evidence>
<evidence type="ECO:0000255" key="2">
    <source>
        <dbReference type="PROSITE-ProRule" id="PRU01275"/>
    </source>
</evidence>
<organismHost>
    <name type="scientific">Sus scrofa</name>
    <name type="common">Pig</name>
    <dbReference type="NCBI Taxonomy" id="9823"/>
</organismHost>
<protein>
    <recommendedName>
        <fullName evidence="1">Membrane protein</fullName>
        <shortName evidence="1">M protein</shortName>
    </recommendedName>
    <alternativeName>
        <fullName evidence="1">E1 glycoprotein</fullName>
    </alternativeName>
    <alternativeName>
        <fullName evidence="1">Matrix glycoprotein</fullName>
    </alternativeName>
    <alternativeName>
        <fullName evidence="1">Membrane glycoprotein</fullName>
    </alternativeName>
</protein>
<feature type="chain" id="PRO_0000037156" description="Membrane protein">
    <location>
        <begin position="1"/>
        <end position="262"/>
    </location>
</feature>
<feature type="topological domain" description="Virion surface" evidence="1">
    <location>
        <begin position="18"/>
        <end position="47"/>
    </location>
</feature>
<feature type="transmembrane region" description="Helical" evidence="1">
    <location>
        <begin position="48"/>
        <end position="68"/>
    </location>
</feature>
<feature type="topological domain" description="Intravirion" evidence="1">
    <location>
        <begin position="69"/>
        <end position="77"/>
    </location>
</feature>
<feature type="transmembrane region" description="Helical" evidence="1">
    <location>
        <begin position="78"/>
        <end position="98"/>
    </location>
</feature>
<feature type="topological domain" description="Virion surface" evidence="1">
    <location>
        <begin position="99"/>
        <end position="112"/>
    </location>
</feature>
<feature type="transmembrane region" description="Helical" evidence="1">
    <location>
        <begin position="113"/>
        <end position="133"/>
    </location>
</feature>
<feature type="topological domain" description="Intravirion" evidence="1">
    <location>
        <begin position="134"/>
        <end position="262"/>
    </location>
</feature>
<feature type="region of interest" description="Interaction with N protein" evidence="1">
    <location>
        <begin position="237"/>
        <end position="252"/>
    </location>
</feature>
<reference key="1">
    <citation type="journal article" date="1991" name="Virus Res.">
        <title>The cloning and sequencing of the virion protein genes from a British isolate of porcine respiratory coronavirus: comparison with transmissible gastroenteritis virus genes.</title>
        <authorList>
            <person name="Britton P."/>
            <person name="Mawditt K.L."/>
            <person name="Page K.W."/>
        </authorList>
    </citation>
    <scope>NUCLEOTIDE SEQUENCE [GENOMIC RNA]</scope>
</reference>
<name>VME1_CVPR8</name>
<keyword id="KW-0325">Glycoprotein</keyword>
<keyword id="KW-1040">Host Golgi apparatus</keyword>
<keyword id="KW-1043">Host membrane</keyword>
<keyword id="KW-0472">Membrane</keyword>
<keyword id="KW-0812">Transmembrane</keyword>
<keyword id="KW-1133">Transmembrane helix</keyword>
<keyword id="KW-0261">Viral envelope protein</keyword>
<keyword id="KW-0468">Viral matrix protein</keyword>
<keyword id="KW-0946">Virion</keyword>